<feature type="chain" id="PRO_0000255133" description="Cytochrome b">
    <location>
        <begin position="1"/>
        <end position="379"/>
    </location>
</feature>
<feature type="transmembrane region" description="Helical" evidence="2">
    <location>
        <begin position="33"/>
        <end position="53"/>
    </location>
</feature>
<feature type="transmembrane region" description="Helical" evidence="2">
    <location>
        <begin position="77"/>
        <end position="98"/>
    </location>
</feature>
<feature type="transmembrane region" description="Helical" evidence="2">
    <location>
        <begin position="113"/>
        <end position="133"/>
    </location>
</feature>
<feature type="transmembrane region" description="Helical" evidence="2">
    <location>
        <begin position="178"/>
        <end position="198"/>
    </location>
</feature>
<feature type="transmembrane region" description="Helical" evidence="2">
    <location>
        <begin position="226"/>
        <end position="246"/>
    </location>
</feature>
<feature type="transmembrane region" description="Helical" evidence="2">
    <location>
        <begin position="288"/>
        <end position="308"/>
    </location>
</feature>
<feature type="transmembrane region" description="Helical" evidence="2">
    <location>
        <begin position="320"/>
        <end position="340"/>
    </location>
</feature>
<feature type="transmembrane region" description="Helical" evidence="2">
    <location>
        <begin position="347"/>
        <end position="367"/>
    </location>
</feature>
<feature type="binding site" description="axial binding residue" evidence="2">
    <location>
        <position position="83"/>
    </location>
    <ligand>
        <name>heme b</name>
        <dbReference type="ChEBI" id="CHEBI:60344"/>
        <label>b562</label>
    </ligand>
    <ligandPart>
        <name>Fe</name>
        <dbReference type="ChEBI" id="CHEBI:18248"/>
    </ligandPart>
</feature>
<feature type="binding site" description="axial binding residue" evidence="2">
    <location>
        <position position="97"/>
    </location>
    <ligand>
        <name>heme b</name>
        <dbReference type="ChEBI" id="CHEBI:60344"/>
        <label>b566</label>
    </ligand>
    <ligandPart>
        <name>Fe</name>
        <dbReference type="ChEBI" id="CHEBI:18248"/>
    </ligandPart>
</feature>
<feature type="binding site" description="axial binding residue" evidence="2">
    <location>
        <position position="182"/>
    </location>
    <ligand>
        <name>heme b</name>
        <dbReference type="ChEBI" id="CHEBI:60344"/>
        <label>b562</label>
    </ligand>
    <ligandPart>
        <name>Fe</name>
        <dbReference type="ChEBI" id="CHEBI:18248"/>
    </ligandPart>
</feature>
<feature type="binding site" description="axial binding residue" evidence="2">
    <location>
        <position position="196"/>
    </location>
    <ligand>
        <name>heme b</name>
        <dbReference type="ChEBI" id="CHEBI:60344"/>
        <label>b566</label>
    </ligand>
    <ligandPart>
        <name>Fe</name>
        <dbReference type="ChEBI" id="CHEBI:18248"/>
    </ligandPart>
</feature>
<feature type="binding site" evidence="2">
    <location>
        <position position="201"/>
    </location>
    <ligand>
        <name>a ubiquinone</name>
        <dbReference type="ChEBI" id="CHEBI:16389"/>
    </ligand>
</feature>
<proteinExistence type="inferred from homology"/>
<protein>
    <recommendedName>
        <fullName>Cytochrome b</fullName>
    </recommendedName>
    <alternativeName>
        <fullName>Complex III subunit 3</fullName>
    </alternativeName>
    <alternativeName>
        <fullName>Complex III subunit III</fullName>
    </alternativeName>
    <alternativeName>
        <fullName>Cytochrome b-c1 complex subunit 3</fullName>
    </alternativeName>
    <alternativeName>
        <fullName>Ubiquinol-cytochrome-c reductase complex cytochrome b subunit</fullName>
    </alternativeName>
</protein>
<accession>O20547</accession>
<comment type="function">
    <text evidence="2">Component of the ubiquinol-cytochrome c reductase complex (complex III or cytochrome b-c1 complex) that is part of the mitochondrial respiratory chain. The b-c1 complex mediates electron transfer from ubiquinol to cytochrome c. Contributes to the generation of a proton gradient across the mitochondrial membrane that is then used for ATP synthesis.</text>
</comment>
<comment type="cofactor">
    <cofactor evidence="2">
        <name>heme b</name>
        <dbReference type="ChEBI" id="CHEBI:60344"/>
    </cofactor>
    <text evidence="2">Binds 2 heme b groups non-covalently.</text>
</comment>
<comment type="subunit">
    <text evidence="2">The cytochrome bc1 complex contains 11 subunits: 3 respiratory subunits (MT-CYB, CYC1 and UQCRFS1), 2 core proteins (UQCRC1 and UQCRC2) and 6 low-molecular weight proteins (UQCRH/QCR6, UQCRB/QCR7, UQCRQ/QCR8, UQCR10/QCR9, UQCR11/QCR10 and a cleavage product of UQCRFS1). This cytochrome bc1 complex then forms a dimer.</text>
</comment>
<comment type="subcellular location">
    <subcellularLocation>
        <location evidence="2">Mitochondrion inner membrane</location>
        <topology evidence="2">Multi-pass membrane protein</topology>
    </subcellularLocation>
</comment>
<comment type="miscellaneous">
    <text evidence="1">Heme 1 (or BL or b562) is low-potential and absorbs at about 562 nm, and heme 2 (or BH or b566) is high-potential and absorbs at about 566 nm.</text>
</comment>
<comment type="similarity">
    <text evidence="3 4">Belongs to the cytochrome b family.</text>
</comment>
<comment type="caution">
    <text evidence="2">The full-length protein contains only eight transmembrane helices, not nine as predicted by bioinformatics tools.</text>
</comment>
<keyword id="KW-0249">Electron transport</keyword>
<keyword id="KW-0349">Heme</keyword>
<keyword id="KW-0408">Iron</keyword>
<keyword id="KW-0472">Membrane</keyword>
<keyword id="KW-0479">Metal-binding</keyword>
<keyword id="KW-0496">Mitochondrion</keyword>
<keyword id="KW-0999">Mitochondrion inner membrane</keyword>
<keyword id="KW-0679">Respiratory chain</keyword>
<keyword id="KW-0812">Transmembrane</keyword>
<keyword id="KW-1133">Transmembrane helix</keyword>
<keyword id="KW-0813">Transport</keyword>
<keyword id="KW-0830">Ubiquinone</keyword>
<evidence type="ECO:0000250" key="1"/>
<evidence type="ECO:0000250" key="2">
    <source>
        <dbReference type="UniProtKB" id="P00157"/>
    </source>
</evidence>
<evidence type="ECO:0000255" key="3">
    <source>
        <dbReference type="PROSITE-ProRule" id="PRU00967"/>
    </source>
</evidence>
<evidence type="ECO:0000255" key="4">
    <source>
        <dbReference type="PROSITE-ProRule" id="PRU00968"/>
    </source>
</evidence>
<reference key="1">
    <citation type="journal article" date="1998" name="Mol. Phylogenet. Evol.">
        <title>The molecular phylogenetics of tuco-tucos (genus Ctenomys, Rodentia: Octodontidae) suggests an early burst of speciation.</title>
        <authorList>
            <person name="Lessa E.P."/>
            <person name="Cook J.A."/>
        </authorList>
    </citation>
    <scope>NUCLEOTIDE SEQUENCE [GENOMIC DNA]</scope>
</reference>
<organism>
    <name type="scientific">Spalacopus cyanus</name>
    <name type="common">Coruro</name>
    <dbReference type="NCBI Taxonomy" id="61880"/>
    <lineage>
        <taxon>Eukaryota</taxon>
        <taxon>Metazoa</taxon>
        <taxon>Chordata</taxon>
        <taxon>Craniata</taxon>
        <taxon>Vertebrata</taxon>
        <taxon>Euteleostomi</taxon>
        <taxon>Mammalia</taxon>
        <taxon>Eutheria</taxon>
        <taxon>Euarchontoglires</taxon>
        <taxon>Glires</taxon>
        <taxon>Rodentia</taxon>
        <taxon>Hystricomorpha</taxon>
        <taxon>Octodontidae</taxon>
        <taxon>Spalacopus</taxon>
    </lineage>
</organism>
<sequence length="379" mass="42870">MTNIRKSHPLIKIINHSLIDLPAPSNISTWWNFGSLLGVCLMLQIVTGLFLAMHYTADTSTAFSSVTHICRDVNYGWLIRYLHANGASMFFILIYLHIGRGIYYGSFTLMETWNIGVVLLFTVMATAFMGYVLPWGQMSFWGATVITNLLSAIPYIGPNLVEWIWGGFSVDKATLTRFFAFHFILPFIITAMVMIHLLFLHETGSNNPSGLDSNSDKIPFHPYYTIKDTLGFMFMALTLTTLVLFTPDLLGDPDNYTPANPLNTPPHIKPEWYFLFAYAILRSIPNKLGGVLALVFSILILILFPMLHLSKQRSMSFRPLSQCLLWILAANLTILTWIGGQPVEHPFITIGQLASVIYFFIILILMPTTSLMENKLLKW</sequence>
<geneLocation type="mitochondrion"/>
<dbReference type="EMBL" id="AF007061">
    <property type="protein sequence ID" value="AAB69220.1"/>
    <property type="molecule type" value="Genomic_DNA"/>
</dbReference>
<dbReference type="SMR" id="O20547"/>
<dbReference type="GO" id="GO:0005743">
    <property type="term" value="C:mitochondrial inner membrane"/>
    <property type="evidence" value="ECO:0007669"/>
    <property type="project" value="UniProtKB-SubCell"/>
</dbReference>
<dbReference type="GO" id="GO:0045275">
    <property type="term" value="C:respiratory chain complex III"/>
    <property type="evidence" value="ECO:0007669"/>
    <property type="project" value="InterPro"/>
</dbReference>
<dbReference type="GO" id="GO:0046872">
    <property type="term" value="F:metal ion binding"/>
    <property type="evidence" value="ECO:0007669"/>
    <property type="project" value="UniProtKB-KW"/>
</dbReference>
<dbReference type="GO" id="GO:0008121">
    <property type="term" value="F:ubiquinol-cytochrome-c reductase activity"/>
    <property type="evidence" value="ECO:0007669"/>
    <property type="project" value="InterPro"/>
</dbReference>
<dbReference type="GO" id="GO:0006122">
    <property type="term" value="P:mitochondrial electron transport, ubiquinol to cytochrome c"/>
    <property type="evidence" value="ECO:0007669"/>
    <property type="project" value="TreeGrafter"/>
</dbReference>
<dbReference type="CDD" id="cd00290">
    <property type="entry name" value="cytochrome_b_C"/>
    <property type="match status" value="1"/>
</dbReference>
<dbReference type="CDD" id="cd00284">
    <property type="entry name" value="Cytochrome_b_N"/>
    <property type="match status" value="1"/>
</dbReference>
<dbReference type="FunFam" id="1.20.810.10:FF:000002">
    <property type="entry name" value="Cytochrome b"/>
    <property type="match status" value="1"/>
</dbReference>
<dbReference type="Gene3D" id="1.20.810.10">
    <property type="entry name" value="Cytochrome Bc1 Complex, Chain C"/>
    <property type="match status" value="1"/>
</dbReference>
<dbReference type="InterPro" id="IPR005798">
    <property type="entry name" value="Cyt_b/b6_C"/>
</dbReference>
<dbReference type="InterPro" id="IPR036150">
    <property type="entry name" value="Cyt_b/b6_C_sf"/>
</dbReference>
<dbReference type="InterPro" id="IPR005797">
    <property type="entry name" value="Cyt_b/b6_N"/>
</dbReference>
<dbReference type="InterPro" id="IPR027387">
    <property type="entry name" value="Cytb/b6-like_sf"/>
</dbReference>
<dbReference type="InterPro" id="IPR030689">
    <property type="entry name" value="Cytochrome_b"/>
</dbReference>
<dbReference type="InterPro" id="IPR048260">
    <property type="entry name" value="Cytochrome_b_C_euk/bac"/>
</dbReference>
<dbReference type="InterPro" id="IPR048259">
    <property type="entry name" value="Cytochrome_b_N_euk/bac"/>
</dbReference>
<dbReference type="InterPro" id="IPR016174">
    <property type="entry name" value="Di-haem_cyt_TM"/>
</dbReference>
<dbReference type="PANTHER" id="PTHR19271">
    <property type="entry name" value="CYTOCHROME B"/>
    <property type="match status" value="1"/>
</dbReference>
<dbReference type="PANTHER" id="PTHR19271:SF16">
    <property type="entry name" value="CYTOCHROME B"/>
    <property type="match status" value="1"/>
</dbReference>
<dbReference type="Pfam" id="PF00032">
    <property type="entry name" value="Cytochrom_B_C"/>
    <property type="match status" value="1"/>
</dbReference>
<dbReference type="Pfam" id="PF00033">
    <property type="entry name" value="Cytochrome_B"/>
    <property type="match status" value="1"/>
</dbReference>
<dbReference type="PIRSF" id="PIRSF038885">
    <property type="entry name" value="COB"/>
    <property type="match status" value="1"/>
</dbReference>
<dbReference type="SUPFAM" id="SSF81648">
    <property type="entry name" value="a domain/subunit of cytochrome bc1 complex (Ubiquinol-cytochrome c reductase)"/>
    <property type="match status" value="1"/>
</dbReference>
<dbReference type="SUPFAM" id="SSF81342">
    <property type="entry name" value="Transmembrane di-heme cytochromes"/>
    <property type="match status" value="1"/>
</dbReference>
<dbReference type="PROSITE" id="PS51003">
    <property type="entry name" value="CYTB_CTER"/>
    <property type="match status" value="1"/>
</dbReference>
<dbReference type="PROSITE" id="PS51002">
    <property type="entry name" value="CYTB_NTER"/>
    <property type="match status" value="1"/>
</dbReference>
<gene>
    <name type="primary">MT-CYB</name>
    <name type="synonym">COB</name>
    <name type="synonym">CYTB</name>
    <name type="synonym">MTCYB</name>
</gene>
<name>CYB_SPACY</name>